<name>RL14_CLOBB</name>
<protein>
    <recommendedName>
        <fullName evidence="1">Large ribosomal subunit protein uL14</fullName>
    </recommendedName>
    <alternativeName>
        <fullName evidence="2">50S ribosomal protein L14</fullName>
    </alternativeName>
</protein>
<evidence type="ECO:0000255" key="1">
    <source>
        <dbReference type="HAMAP-Rule" id="MF_01367"/>
    </source>
</evidence>
<evidence type="ECO:0000305" key="2"/>
<gene>
    <name evidence="1" type="primary">rplN</name>
    <name type="ordered locus">CLL_A0248</name>
</gene>
<dbReference type="EMBL" id="CP001056">
    <property type="protein sequence ID" value="ACD23902.1"/>
    <property type="molecule type" value="Genomic_DNA"/>
</dbReference>
<dbReference type="SMR" id="B2TII5"/>
<dbReference type="KEGG" id="cbk:CLL_A0248"/>
<dbReference type="PATRIC" id="fig|935198.13.peg.223"/>
<dbReference type="HOGENOM" id="CLU_095071_2_1_9"/>
<dbReference type="Proteomes" id="UP000001195">
    <property type="component" value="Chromosome"/>
</dbReference>
<dbReference type="GO" id="GO:0022625">
    <property type="term" value="C:cytosolic large ribosomal subunit"/>
    <property type="evidence" value="ECO:0007669"/>
    <property type="project" value="TreeGrafter"/>
</dbReference>
<dbReference type="GO" id="GO:0070180">
    <property type="term" value="F:large ribosomal subunit rRNA binding"/>
    <property type="evidence" value="ECO:0007669"/>
    <property type="project" value="TreeGrafter"/>
</dbReference>
<dbReference type="GO" id="GO:0003735">
    <property type="term" value="F:structural constituent of ribosome"/>
    <property type="evidence" value="ECO:0007669"/>
    <property type="project" value="InterPro"/>
</dbReference>
<dbReference type="GO" id="GO:0006412">
    <property type="term" value="P:translation"/>
    <property type="evidence" value="ECO:0007669"/>
    <property type="project" value="UniProtKB-UniRule"/>
</dbReference>
<dbReference type="CDD" id="cd00337">
    <property type="entry name" value="Ribosomal_uL14"/>
    <property type="match status" value="1"/>
</dbReference>
<dbReference type="FunFam" id="2.40.150.20:FF:000001">
    <property type="entry name" value="50S ribosomal protein L14"/>
    <property type="match status" value="1"/>
</dbReference>
<dbReference type="Gene3D" id="2.40.150.20">
    <property type="entry name" value="Ribosomal protein L14"/>
    <property type="match status" value="1"/>
</dbReference>
<dbReference type="HAMAP" id="MF_01367">
    <property type="entry name" value="Ribosomal_uL14"/>
    <property type="match status" value="1"/>
</dbReference>
<dbReference type="InterPro" id="IPR000218">
    <property type="entry name" value="Ribosomal_uL14"/>
</dbReference>
<dbReference type="InterPro" id="IPR005745">
    <property type="entry name" value="Ribosomal_uL14_bac-type"/>
</dbReference>
<dbReference type="InterPro" id="IPR019972">
    <property type="entry name" value="Ribosomal_uL14_CS"/>
</dbReference>
<dbReference type="InterPro" id="IPR036853">
    <property type="entry name" value="Ribosomal_uL14_sf"/>
</dbReference>
<dbReference type="NCBIfam" id="TIGR01067">
    <property type="entry name" value="rplN_bact"/>
    <property type="match status" value="1"/>
</dbReference>
<dbReference type="PANTHER" id="PTHR11761">
    <property type="entry name" value="50S/60S RIBOSOMAL PROTEIN L14/L23"/>
    <property type="match status" value="1"/>
</dbReference>
<dbReference type="PANTHER" id="PTHR11761:SF3">
    <property type="entry name" value="LARGE RIBOSOMAL SUBUNIT PROTEIN UL14M"/>
    <property type="match status" value="1"/>
</dbReference>
<dbReference type="Pfam" id="PF00238">
    <property type="entry name" value="Ribosomal_L14"/>
    <property type="match status" value="1"/>
</dbReference>
<dbReference type="SMART" id="SM01374">
    <property type="entry name" value="Ribosomal_L14"/>
    <property type="match status" value="1"/>
</dbReference>
<dbReference type="SUPFAM" id="SSF50193">
    <property type="entry name" value="Ribosomal protein L14"/>
    <property type="match status" value="1"/>
</dbReference>
<dbReference type="PROSITE" id="PS00049">
    <property type="entry name" value="RIBOSOMAL_L14"/>
    <property type="match status" value="1"/>
</dbReference>
<comment type="function">
    <text evidence="1">Binds to 23S rRNA. Forms part of two intersubunit bridges in the 70S ribosome.</text>
</comment>
<comment type="subunit">
    <text evidence="1">Part of the 50S ribosomal subunit. Forms a cluster with proteins L3 and L19. In the 70S ribosome, L14 and L19 interact and together make contacts with the 16S rRNA in bridges B5 and B8.</text>
</comment>
<comment type="similarity">
    <text evidence="1">Belongs to the universal ribosomal protein uL14 family.</text>
</comment>
<feature type="chain" id="PRO_1000144245" description="Large ribosomal subunit protein uL14">
    <location>
        <begin position="1"/>
        <end position="122"/>
    </location>
</feature>
<organism>
    <name type="scientific">Clostridium botulinum (strain Eklund 17B / Type B)</name>
    <dbReference type="NCBI Taxonomy" id="935198"/>
    <lineage>
        <taxon>Bacteria</taxon>
        <taxon>Bacillati</taxon>
        <taxon>Bacillota</taxon>
        <taxon>Clostridia</taxon>
        <taxon>Eubacteriales</taxon>
        <taxon>Clostridiaceae</taxon>
        <taxon>Clostridium</taxon>
    </lineage>
</organism>
<proteinExistence type="inferred from homology"/>
<sequence length="122" mass="13190">MIQPQTLLKVADNSGAKEIMCIRVLGGSKRKFGNISDVIVASVKSATPGGVVKKGEVVKAVIVRSAKGLRRADGSYIKFDENAAVIIKDDKQPRGTRIFGPVARELRDKEFNKILSLAPEVL</sequence>
<accession>B2TII5</accession>
<reference key="1">
    <citation type="submission" date="2008-04" db="EMBL/GenBank/DDBJ databases">
        <title>Complete sequence of Clostridium botulinum strain Eklund.</title>
        <authorList>
            <person name="Brinkac L.M."/>
            <person name="Brown J.L."/>
            <person name="Bruce D."/>
            <person name="Detter C."/>
            <person name="Munk C."/>
            <person name="Smith L.A."/>
            <person name="Smith T.J."/>
            <person name="Sutton G."/>
            <person name="Brettin T.S."/>
        </authorList>
    </citation>
    <scope>NUCLEOTIDE SEQUENCE [LARGE SCALE GENOMIC DNA]</scope>
    <source>
        <strain>Eklund 17B / Type B</strain>
    </source>
</reference>
<keyword id="KW-0687">Ribonucleoprotein</keyword>
<keyword id="KW-0689">Ribosomal protein</keyword>
<keyword id="KW-0694">RNA-binding</keyword>
<keyword id="KW-0699">rRNA-binding</keyword>